<evidence type="ECO:0000250" key="1"/>
<evidence type="ECO:0000269" key="2">
    <source>
    </source>
</evidence>
<evidence type="ECO:0000305" key="3"/>
<reference key="1">
    <citation type="journal article" date="1990" name="Proc. Natl. Acad. Sci. U.S.A.">
        <title>Molecular cloning of cDNA encoding a second cellular retinoic acid-binding protein.</title>
        <authorList>
            <person name="Giguere V."/>
            <person name="Lyn S."/>
            <person name="Yip P."/>
            <person name="Siu C.-H."/>
            <person name="Amin S."/>
        </authorList>
    </citation>
    <scope>NUCLEOTIDE SEQUENCE [MRNA]</scope>
</reference>
<reference key="2">
    <citation type="journal article" date="1992" name="J. Biol. Chem.">
        <title>The murine gene for cellular retinoic acid-binding protein type II. Genomic organization, chromosomal localization, and post-transcriptional regulation by retinoic acid.</title>
        <authorList>
            <person name="Macgregor T.M."/>
            <person name="Copeland N.G."/>
            <person name="Jenkins N.A."/>
            <person name="Giguere V."/>
        </authorList>
    </citation>
    <scope>NUCLEOTIDE SEQUENCE [GENOMIC DNA]</scope>
</reference>
<reference key="3">
    <citation type="journal article" date="2004" name="Genome Res.">
        <title>The status, quality, and expansion of the NIH full-length cDNA project: the Mammalian Gene Collection (MGC).</title>
        <authorList>
            <consortium name="The MGC Project Team"/>
        </authorList>
    </citation>
    <scope>NUCLEOTIDE SEQUENCE [LARGE SCALE MRNA]</scope>
    <source>
        <strain>Czech II</strain>
        <tissue>Mammary gland</tissue>
    </source>
</reference>
<reference key="4">
    <citation type="journal article" date="1999" name="Mol. Cell. Biol.">
        <title>Physical and functional interactions between cellular retinoic acid binding protein II and the retinoic acid-dependent nuclear complex.</title>
        <authorList>
            <person name="Delva L."/>
            <person name="Bastie J.-N."/>
            <person name="Rochette-Egly C."/>
            <person name="Kraiba R."/>
            <person name="Balitrand N."/>
            <person name="Despouy G."/>
            <person name="Chambon P."/>
            <person name="Chomienne C."/>
        </authorList>
    </citation>
    <scope>FUNCTION</scope>
    <scope>SUBCELLULAR LOCATION</scope>
</reference>
<dbReference type="EMBL" id="M35523">
    <property type="protein sequence ID" value="AAA37454.1"/>
    <property type="molecule type" value="mRNA"/>
</dbReference>
<dbReference type="EMBL" id="M87539">
    <property type="protein sequence ID" value="AAA37452.1"/>
    <property type="molecule type" value="Genomic_DNA"/>
</dbReference>
<dbReference type="EMBL" id="M87538">
    <property type="protein sequence ID" value="AAA37452.1"/>
    <property type="status" value="JOINED"/>
    <property type="molecule type" value="Genomic_DNA"/>
</dbReference>
<dbReference type="EMBL" id="BC018397">
    <property type="protein sequence ID" value="AAH18397.1"/>
    <property type="molecule type" value="mRNA"/>
</dbReference>
<dbReference type="CCDS" id="CCDS17460.1"/>
<dbReference type="PIR" id="A42495">
    <property type="entry name" value="A42495"/>
</dbReference>
<dbReference type="RefSeq" id="NP_031785.1">
    <property type="nucleotide sequence ID" value="NM_007759.2"/>
</dbReference>
<dbReference type="SMR" id="P22935"/>
<dbReference type="FunCoup" id="P22935">
    <property type="interactions" value="1015"/>
</dbReference>
<dbReference type="STRING" id="10090.ENSMUSP00000005019"/>
<dbReference type="BindingDB" id="P22935"/>
<dbReference type="ChEMBL" id="CHEMBL4172"/>
<dbReference type="DrugCentral" id="P22935"/>
<dbReference type="iPTMnet" id="P22935"/>
<dbReference type="PhosphoSitePlus" id="P22935"/>
<dbReference type="PaxDb" id="10090-ENSMUSP00000005019"/>
<dbReference type="PeptideAtlas" id="P22935"/>
<dbReference type="ProteomicsDB" id="300387"/>
<dbReference type="Antibodypedia" id="20440">
    <property type="antibodies" value="706 antibodies from 40 providers"/>
</dbReference>
<dbReference type="DNASU" id="12904"/>
<dbReference type="Ensembl" id="ENSMUST00000005019.6">
    <property type="protein sequence ID" value="ENSMUSP00000005019.6"/>
    <property type="gene ID" value="ENSMUSG00000004885.6"/>
</dbReference>
<dbReference type="GeneID" id="12904"/>
<dbReference type="KEGG" id="mmu:12904"/>
<dbReference type="UCSC" id="uc008ptk.1">
    <property type="organism name" value="mouse"/>
</dbReference>
<dbReference type="AGR" id="MGI:88491"/>
<dbReference type="CTD" id="1382"/>
<dbReference type="MGI" id="MGI:88491">
    <property type="gene designation" value="Crabp2"/>
</dbReference>
<dbReference type="VEuPathDB" id="HostDB:ENSMUSG00000004885"/>
<dbReference type="eggNOG" id="KOG4015">
    <property type="taxonomic scope" value="Eukaryota"/>
</dbReference>
<dbReference type="GeneTree" id="ENSGT00940000157619"/>
<dbReference type="HOGENOM" id="CLU_113772_0_2_1"/>
<dbReference type="InParanoid" id="P22935"/>
<dbReference type="OMA" id="PVWETDN"/>
<dbReference type="OrthoDB" id="195110at2759"/>
<dbReference type="PhylomeDB" id="P22935"/>
<dbReference type="TreeFam" id="TF316894"/>
<dbReference type="Reactome" id="R-MMU-5362517">
    <property type="pathway name" value="Signaling by Retinoic Acid"/>
</dbReference>
<dbReference type="BioGRID-ORCS" id="12904">
    <property type="hits" value="3 hits in 82 CRISPR screens"/>
</dbReference>
<dbReference type="PRO" id="PR:P22935"/>
<dbReference type="Proteomes" id="UP000000589">
    <property type="component" value="Chromosome 3"/>
</dbReference>
<dbReference type="RNAct" id="P22935">
    <property type="molecule type" value="protein"/>
</dbReference>
<dbReference type="Bgee" id="ENSMUSG00000004885">
    <property type="expression patterns" value="Expressed in somite and 257 other cell types or tissues"/>
</dbReference>
<dbReference type="GO" id="GO:0005737">
    <property type="term" value="C:cytoplasm"/>
    <property type="evidence" value="ECO:0000314"/>
    <property type="project" value="UniProtKB"/>
</dbReference>
<dbReference type="GO" id="GO:0005829">
    <property type="term" value="C:cytosol"/>
    <property type="evidence" value="ECO:0007669"/>
    <property type="project" value="Ensembl"/>
</dbReference>
<dbReference type="GO" id="GO:0005783">
    <property type="term" value="C:endoplasmic reticulum"/>
    <property type="evidence" value="ECO:0000314"/>
    <property type="project" value="CACAO"/>
</dbReference>
<dbReference type="GO" id="GO:0005654">
    <property type="term" value="C:nucleoplasm"/>
    <property type="evidence" value="ECO:0007669"/>
    <property type="project" value="Ensembl"/>
</dbReference>
<dbReference type="GO" id="GO:0005634">
    <property type="term" value="C:nucleus"/>
    <property type="evidence" value="ECO:0000314"/>
    <property type="project" value="CACAO"/>
</dbReference>
<dbReference type="GO" id="GO:0030332">
    <property type="term" value="F:cyclin binding"/>
    <property type="evidence" value="ECO:0000266"/>
    <property type="project" value="MGI"/>
</dbReference>
<dbReference type="GO" id="GO:0016918">
    <property type="term" value="F:retinal binding"/>
    <property type="evidence" value="ECO:0007669"/>
    <property type="project" value="UniProtKB-KW"/>
</dbReference>
<dbReference type="GO" id="GO:0001972">
    <property type="term" value="F:retinoic acid binding"/>
    <property type="evidence" value="ECO:0000314"/>
    <property type="project" value="MGI"/>
</dbReference>
<dbReference type="GO" id="GO:0019841">
    <property type="term" value="F:retinol binding"/>
    <property type="evidence" value="ECO:0007669"/>
    <property type="project" value="UniProtKB-KW"/>
</dbReference>
<dbReference type="GO" id="GO:0035115">
    <property type="term" value="P:embryonic forelimb morphogenesis"/>
    <property type="evidence" value="ECO:0000315"/>
    <property type="project" value="MGI"/>
</dbReference>
<dbReference type="GO" id="GO:0048672">
    <property type="term" value="P:positive regulation of collateral sprouting"/>
    <property type="evidence" value="ECO:0000314"/>
    <property type="project" value="MGI"/>
</dbReference>
<dbReference type="GO" id="GO:0042573">
    <property type="term" value="P:retinoic acid metabolic process"/>
    <property type="evidence" value="ECO:0000314"/>
    <property type="project" value="MGI"/>
</dbReference>
<dbReference type="FunFam" id="2.40.128.20:FF:000001">
    <property type="entry name" value="Fatty acid-binding protein, adipocyte"/>
    <property type="match status" value="1"/>
</dbReference>
<dbReference type="Gene3D" id="2.40.128.20">
    <property type="match status" value="1"/>
</dbReference>
<dbReference type="InterPro" id="IPR012674">
    <property type="entry name" value="Calycin"/>
</dbReference>
<dbReference type="InterPro" id="IPR000463">
    <property type="entry name" value="Fatty_acid-bd"/>
</dbReference>
<dbReference type="InterPro" id="IPR031259">
    <property type="entry name" value="ILBP"/>
</dbReference>
<dbReference type="InterPro" id="IPR000566">
    <property type="entry name" value="Lipocln_cytosolic_FA-bd_dom"/>
</dbReference>
<dbReference type="PANTHER" id="PTHR11955">
    <property type="entry name" value="FATTY ACID BINDING PROTEIN"/>
    <property type="match status" value="1"/>
</dbReference>
<dbReference type="Pfam" id="PF00061">
    <property type="entry name" value="Lipocalin"/>
    <property type="match status" value="1"/>
</dbReference>
<dbReference type="PRINTS" id="PR00178">
    <property type="entry name" value="FATTYACIDBP"/>
</dbReference>
<dbReference type="SUPFAM" id="SSF50814">
    <property type="entry name" value="Lipocalins"/>
    <property type="match status" value="1"/>
</dbReference>
<dbReference type="PROSITE" id="PS00214">
    <property type="entry name" value="FABP"/>
    <property type="match status" value="1"/>
</dbReference>
<proteinExistence type="evidence at transcript level"/>
<keyword id="KW-0963">Cytoplasm</keyword>
<keyword id="KW-0256">Endoplasmic reticulum</keyword>
<keyword id="KW-1017">Isopeptide bond</keyword>
<keyword id="KW-0539">Nucleus</keyword>
<keyword id="KW-1185">Reference proteome</keyword>
<keyword id="KW-0683">Retinol-binding</keyword>
<keyword id="KW-0813">Transport</keyword>
<keyword id="KW-0832">Ubl conjugation</keyword>
<keyword id="KW-0845">Vitamin A</keyword>
<accession>P22935</accession>
<name>RABP2_MOUSE</name>
<protein>
    <recommendedName>
        <fullName>Cellular retinoic acid-binding protein 2</fullName>
    </recommendedName>
    <alternativeName>
        <fullName>Cellular retinoic acid-binding protein II</fullName>
        <shortName>CRABP-II</shortName>
    </alternativeName>
</protein>
<organism>
    <name type="scientific">Mus musculus</name>
    <name type="common">Mouse</name>
    <dbReference type="NCBI Taxonomy" id="10090"/>
    <lineage>
        <taxon>Eukaryota</taxon>
        <taxon>Metazoa</taxon>
        <taxon>Chordata</taxon>
        <taxon>Craniata</taxon>
        <taxon>Vertebrata</taxon>
        <taxon>Euteleostomi</taxon>
        <taxon>Mammalia</taxon>
        <taxon>Eutheria</taxon>
        <taxon>Euarchontoglires</taxon>
        <taxon>Glires</taxon>
        <taxon>Rodentia</taxon>
        <taxon>Myomorpha</taxon>
        <taxon>Muroidea</taxon>
        <taxon>Muridae</taxon>
        <taxon>Murinae</taxon>
        <taxon>Mus</taxon>
        <taxon>Mus</taxon>
    </lineage>
</organism>
<feature type="chain" id="PRO_0000067416" description="Cellular retinoic acid-binding protein 2">
    <location>
        <begin position="1"/>
        <end position="138"/>
    </location>
</feature>
<feature type="short sequence motif" description="Nuclear localization signal" evidence="1">
    <location>
        <begin position="21"/>
        <end position="31"/>
    </location>
</feature>
<feature type="binding site" evidence="1">
    <location>
        <begin position="133"/>
        <end position="135"/>
    </location>
    <ligand>
        <name>all-trans-retinoate</name>
        <dbReference type="ChEBI" id="CHEBI:35291"/>
    </ligand>
</feature>
<feature type="cross-link" description="Glycyl lysine isopeptide (Lys-Gly) (interchain with G-Cter in SUMO)" evidence="1">
    <location>
        <position position="102"/>
    </location>
</feature>
<comment type="function">
    <text evidence="2">Transports retinoic acid to the nucleus. Regulates the access of retinoic acid to the nuclear retinoic acid receptors.</text>
</comment>
<comment type="subunit">
    <text evidence="1">Interacts with importin alpha (By similarity). Interacts with RXR and RARA.</text>
</comment>
<comment type="subcellular location">
    <subcellularLocation>
        <location evidence="2">Cytoplasm</location>
    </subcellularLocation>
    <subcellularLocation>
        <location evidence="1">Endoplasmic reticulum</location>
    </subcellularLocation>
    <subcellularLocation>
        <location evidence="2">Nucleus</location>
    </subcellularLocation>
    <text>Upon ligand binding, a conformation change exposes a nuclear localization motif and the protein is transported into the nucleus.</text>
</comment>
<comment type="tissue specificity">
    <text>Embryo and skin of adult mouse.</text>
</comment>
<comment type="induction">
    <text>By retinoic acid.</text>
</comment>
<comment type="domain">
    <text evidence="1">Forms a beta-barrel structure that accommodates hydrophobic ligands in its interior.</text>
</comment>
<comment type="PTM">
    <text>Sumoylated in response to retinoic acid binding, sumoylation is critical for dissociation from ER and subsequent nuclear translocation.</text>
</comment>
<comment type="similarity">
    <text evidence="3">Belongs to the calycin superfamily. Fatty-acid binding protein (FABP) family.</text>
</comment>
<gene>
    <name type="primary">Crabp2</name>
</gene>
<sequence>MPNFSGNWKIIRSENFEEMLKALGVNMMMRKIAVAAASKPAVEIKQENDTFYIKTSTTVRTTEINFKIGEEFEEQTVDGRPCKSLVKWESGNKMVCEQRLLKGEGPKTSWSRELTNDGELILTMTADDVVCTRVYVRE</sequence>